<sequence>MDSHTLLQALIYLGSAALIVPIAVRLGLGSVLGYLIAGCIIGPWGLRLVTDAESILHFAEIGVVLMLFVIGLELDPQRLWKLRASVFGGGALQMVVCGGLIGLFCMFLGLRWQVAELIGMTLALSSTAIAMQAMNERNLTVSQVGRSAFAVLLFQDIAAIPLVAMIPLLAASGASTTLGAFALSALKVAGALALVVLLGRYVTRPALRFVARSGLREVFSAVALFLVFGFGLLLEEVGLSMAMGAFLAGVLLASSEYRHALESDIEPFKGLLLGLFFIGVGMSIDFGTLVENPLRILLLLAGFLAIKIVMLWLVARPLGVPAKQRRWFAVLLGQGSEFAFVVFGAAQMADVLEPEWAKALTLAVALSMAATPIFLVLLTRMEKTATGEAREADEIDEEQPRVIVAGFGRFGQIAGRLLLSSGVKMVVLDHDPDHIETLRKFGMKVFYGDATRMDLLESAGAAKAEVLINAIDDPQTNLQLSELVKTHFPHLQIIARARDVDHYIRLRQAGVAMPERETFEGALKSGRQALEALGLGRYEARERADLFRHFNTRMVEEMAKGENDPLSRAAAYKRTSAMLSEIITEDREHLSLIQRHGWQGTAEGKHSGEVADEPEVKPSI</sequence>
<feature type="chain" id="PRO_1000145545" description="Glutathione-regulated potassium-efflux system protein KefC">
    <location>
        <begin position="1"/>
        <end position="620"/>
    </location>
</feature>
<feature type="transmembrane region" description="Helical" evidence="1">
    <location>
        <begin position="4"/>
        <end position="24"/>
    </location>
</feature>
<feature type="transmembrane region" description="Helical" evidence="1">
    <location>
        <begin position="26"/>
        <end position="46"/>
    </location>
</feature>
<feature type="transmembrane region" description="Helical" evidence="1">
    <location>
        <begin position="54"/>
        <end position="74"/>
    </location>
</feature>
<feature type="transmembrane region" description="Helical" evidence="1">
    <location>
        <begin position="90"/>
        <end position="110"/>
    </location>
</feature>
<feature type="transmembrane region" description="Helical" evidence="1">
    <location>
        <begin position="114"/>
        <end position="134"/>
    </location>
</feature>
<feature type="transmembrane region" description="Helical" evidence="1">
    <location>
        <begin position="149"/>
        <end position="169"/>
    </location>
</feature>
<feature type="transmembrane region" description="Helical" evidence="1">
    <location>
        <begin position="178"/>
        <end position="198"/>
    </location>
</feature>
<feature type="transmembrane region" description="Helical" evidence="1">
    <location>
        <begin position="218"/>
        <end position="238"/>
    </location>
</feature>
<feature type="transmembrane region" description="Helical" evidence="1">
    <location>
        <begin position="270"/>
        <end position="290"/>
    </location>
</feature>
<feature type="transmembrane region" description="Helical" evidence="1">
    <location>
        <begin position="294"/>
        <end position="314"/>
    </location>
</feature>
<feature type="transmembrane region" description="Helical" evidence="1">
    <location>
        <begin position="327"/>
        <end position="347"/>
    </location>
</feature>
<feature type="transmembrane region" description="Helical" evidence="1">
    <location>
        <begin position="359"/>
        <end position="379"/>
    </location>
</feature>
<feature type="domain" description="RCK N-terminal" evidence="2">
    <location>
        <begin position="399"/>
        <end position="518"/>
    </location>
</feature>
<feature type="region of interest" description="Disordered" evidence="3">
    <location>
        <begin position="599"/>
        <end position="620"/>
    </location>
</feature>
<protein>
    <recommendedName>
        <fullName evidence="1">Glutathione-regulated potassium-efflux system protein KefC</fullName>
    </recommendedName>
    <alternativeName>
        <fullName evidence="1">K(+)/H(+) antiporter</fullName>
    </alternativeName>
</protein>
<keyword id="KW-0050">Antiport</keyword>
<keyword id="KW-0997">Cell inner membrane</keyword>
<keyword id="KW-1003">Cell membrane</keyword>
<keyword id="KW-0406">Ion transport</keyword>
<keyword id="KW-0472">Membrane</keyword>
<keyword id="KW-0630">Potassium</keyword>
<keyword id="KW-0633">Potassium transport</keyword>
<keyword id="KW-0812">Transmembrane</keyword>
<keyword id="KW-1133">Transmembrane helix</keyword>
<keyword id="KW-0813">Transport</keyword>
<name>KEFC_SALA4</name>
<accession>B5F767</accession>
<comment type="function">
    <text evidence="1">Pore-forming subunit of a potassium efflux system that confers protection against electrophiles. Catalyzes K(+)/H(+) antiport.</text>
</comment>
<comment type="subunit">
    <text evidence="1">Homodimer. Interacts with the regulatory subunit KefF.</text>
</comment>
<comment type="subcellular location">
    <subcellularLocation>
        <location evidence="1">Cell inner membrane</location>
        <topology evidence="1">Multi-pass membrane protein</topology>
    </subcellularLocation>
</comment>
<comment type="similarity">
    <text evidence="1">Belongs to the monovalent cation:proton antiporter 2 (CPA2) transporter (TC 2.A.37) family. KefC subfamily.</text>
</comment>
<gene>
    <name evidence="1" type="primary">kefC</name>
    <name type="ordered locus">SeAg_B0095</name>
</gene>
<evidence type="ECO:0000255" key="1">
    <source>
        <dbReference type="HAMAP-Rule" id="MF_01413"/>
    </source>
</evidence>
<evidence type="ECO:0000255" key="2">
    <source>
        <dbReference type="PROSITE-ProRule" id="PRU00543"/>
    </source>
</evidence>
<evidence type="ECO:0000256" key="3">
    <source>
        <dbReference type="SAM" id="MobiDB-lite"/>
    </source>
</evidence>
<organism>
    <name type="scientific">Salmonella agona (strain SL483)</name>
    <dbReference type="NCBI Taxonomy" id="454166"/>
    <lineage>
        <taxon>Bacteria</taxon>
        <taxon>Pseudomonadati</taxon>
        <taxon>Pseudomonadota</taxon>
        <taxon>Gammaproteobacteria</taxon>
        <taxon>Enterobacterales</taxon>
        <taxon>Enterobacteriaceae</taxon>
        <taxon>Salmonella</taxon>
    </lineage>
</organism>
<proteinExistence type="inferred from homology"/>
<reference key="1">
    <citation type="journal article" date="2011" name="J. Bacteriol.">
        <title>Comparative genomics of 28 Salmonella enterica isolates: evidence for CRISPR-mediated adaptive sublineage evolution.</title>
        <authorList>
            <person name="Fricke W.F."/>
            <person name="Mammel M.K."/>
            <person name="McDermott P.F."/>
            <person name="Tartera C."/>
            <person name="White D.G."/>
            <person name="Leclerc J.E."/>
            <person name="Ravel J."/>
            <person name="Cebula T.A."/>
        </authorList>
    </citation>
    <scope>NUCLEOTIDE SEQUENCE [LARGE SCALE GENOMIC DNA]</scope>
    <source>
        <strain>SL483</strain>
    </source>
</reference>
<dbReference type="EMBL" id="CP001138">
    <property type="protein sequence ID" value="ACH52204.1"/>
    <property type="molecule type" value="Genomic_DNA"/>
</dbReference>
<dbReference type="RefSeq" id="WP_000377166.1">
    <property type="nucleotide sequence ID" value="NC_011149.1"/>
</dbReference>
<dbReference type="SMR" id="B5F767"/>
<dbReference type="KEGG" id="sea:SeAg_B0095"/>
<dbReference type="HOGENOM" id="CLU_005126_9_3_6"/>
<dbReference type="Proteomes" id="UP000008819">
    <property type="component" value="Chromosome"/>
</dbReference>
<dbReference type="GO" id="GO:0005886">
    <property type="term" value="C:plasma membrane"/>
    <property type="evidence" value="ECO:0007669"/>
    <property type="project" value="UniProtKB-SubCell"/>
</dbReference>
<dbReference type="GO" id="GO:0019899">
    <property type="term" value="F:enzyme binding"/>
    <property type="evidence" value="ECO:0007669"/>
    <property type="project" value="InterPro"/>
</dbReference>
<dbReference type="GO" id="GO:0015503">
    <property type="term" value="F:glutathione-regulated potassium exporter activity"/>
    <property type="evidence" value="ECO:0007669"/>
    <property type="project" value="UniProtKB-UniRule"/>
</dbReference>
<dbReference type="GO" id="GO:0015643">
    <property type="term" value="F:toxic substance binding"/>
    <property type="evidence" value="ECO:0007669"/>
    <property type="project" value="InterPro"/>
</dbReference>
<dbReference type="GO" id="GO:1902600">
    <property type="term" value="P:proton transmembrane transport"/>
    <property type="evidence" value="ECO:0007669"/>
    <property type="project" value="InterPro"/>
</dbReference>
<dbReference type="GO" id="GO:0051595">
    <property type="term" value="P:response to methylglyoxal"/>
    <property type="evidence" value="ECO:0007669"/>
    <property type="project" value="InterPro"/>
</dbReference>
<dbReference type="FunFam" id="1.20.1530.20:FF:000001">
    <property type="entry name" value="Glutathione-regulated potassium-efflux system protein KefB"/>
    <property type="match status" value="1"/>
</dbReference>
<dbReference type="FunFam" id="3.40.50.720:FF:000036">
    <property type="entry name" value="Glutathione-regulated potassium-efflux system protein KefB"/>
    <property type="match status" value="1"/>
</dbReference>
<dbReference type="Gene3D" id="1.20.1530.20">
    <property type="match status" value="1"/>
</dbReference>
<dbReference type="Gene3D" id="3.40.50.720">
    <property type="entry name" value="NAD(P)-binding Rossmann-like Domain"/>
    <property type="match status" value="1"/>
</dbReference>
<dbReference type="HAMAP" id="MF_01413">
    <property type="entry name" value="K_H_efflux_KefC"/>
    <property type="match status" value="1"/>
</dbReference>
<dbReference type="InterPro" id="IPR006153">
    <property type="entry name" value="Cation/H_exchanger_TM"/>
</dbReference>
<dbReference type="InterPro" id="IPR004771">
    <property type="entry name" value="K/H_exchanger"/>
</dbReference>
<dbReference type="InterPro" id="IPR023941">
    <property type="entry name" value="K_H_efflux_KefC"/>
</dbReference>
<dbReference type="InterPro" id="IPR006036">
    <property type="entry name" value="K_uptake_TrkA"/>
</dbReference>
<dbReference type="InterPro" id="IPR038770">
    <property type="entry name" value="Na+/solute_symporter_sf"/>
</dbReference>
<dbReference type="InterPro" id="IPR036291">
    <property type="entry name" value="NAD(P)-bd_dom_sf"/>
</dbReference>
<dbReference type="InterPro" id="IPR003148">
    <property type="entry name" value="RCK_N"/>
</dbReference>
<dbReference type="NCBIfam" id="TIGR00932">
    <property type="entry name" value="2a37"/>
    <property type="match status" value="1"/>
</dbReference>
<dbReference type="NCBIfam" id="NF002924">
    <property type="entry name" value="PRK03562.1"/>
    <property type="match status" value="1"/>
</dbReference>
<dbReference type="PANTHER" id="PTHR46157:SF3">
    <property type="entry name" value="GLUTATHIONE-REGULATED POTASSIUM-EFFLUX SYSTEM PROTEIN KEFC"/>
    <property type="match status" value="1"/>
</dbReference>
<dbReference type="PANTHER" id="PTHR46157">
    <property type="entry name" value="K(+) EFFLUX ANTIPORTER 3, CHLOROPLASTIC"/>
    <property type="match status" value="1"/>
</dbReference>
<dbReference type="Pfam" id="PF00999">
    <property type="entry name" value="Na_H_Exchanger"/>
    <property type="match status" value="1"/>
</dbReference>
<dbReference type="Pfam" id="PF02254">
    <property type="entry name" value="TrkA_N"/>
    <property type="match status" value="1"/>
</dbReference>
<dbReference type="PRINTS" id="PR00335">
    <property type="entry name" value="KUPTAKETRKA"/>
</dbReference>
<dbReference type="SUPFAM" id="SSF51735">
    <property type="entry name" value="NAD(P)-binding Rossmann-fold domains"/>
    <property type="match status" value="1"/>
</dbReference>
<dbReference type="PROSITE" id="PS51201">
    <property type="entry name" value="RCK_N"/>
    <property type="match status" value="1"/>
</dbReference>